<name>NUOA1_GEOMG</name>
<reference key="1">
    <citation type="journal article" date="2009" name="BMC Microbiol.">
        <title>The genome sequence of Geobacter metallireducens: features of metabolism, physiology and regulation common and dissimilar to Geobacter sulfurreducens.</title>
        <authorList>
            <person name="Aklujkar M."/>
            <person name="Krushkal J."/>
            <person name="DiBartolo G."/>
            <person name="Lapidus A."/>
            <person name="Land M.L."/>
            <person name="Lovley D.R."/>
        </authorList>
    </citation>
    <scope>NUCLEOTIDE SEQUENCE [LARGE SCALE GENOMIC DNA]</scope>
    <source>
        <strain>ATCC 53774 / DSM 7210 / GS-15</strain>
    </source>
</reference>
<evidence type="ECO:0000255" key="1">
    <source>
        <dbReference type="HAMAP-Rule" id="MF_01394"/>
    </source>
</evidence>
<gene>
    <name evidence="1" type="primary">nuoA1</name>
    <name type="ordered locus">Gmet_0152</name>
</gene>
<organism>
    <name type="scientific">Geobacter metallireducens (strain ATCC 53774 / DSM 7210 / GS-15)</name>
    <dbReference type="NCBI Taxonomy" id="269799"/>
    <lineage>
        <taxon>Bacteria</taxon>
        <taxon>Pseudomonadati</taxon>
        <taxon>Thermodesulfobacteriota</taxon>
        <taxon>Desulfuromonadia</taxon>
        <taxon>Geobacterales</taxon>
        <taxon>Geobacteraceae</taxon>
        <taxon>Geobacter</taxon>
    </lineage>
</organism>
<dbReference type="EC" id="7.1.1.-" evidence="1"/>
<dbReference type="EMBL" id="CP000148">
    <property type="protein sequence ID" value="ABB30399.1"/>
    <property type="molecule type" value="Genomic_DNA"/>
</dbReference>
<dbReference type="RefSeq" id="WP_004512739.1">
    <property type="nucleotide sequence ID" value="NC_007517.1"/>
</dbReference>
<dbReference type="SMR" id="Q39ZC5"/>
<dbReference type="STRING" id="269799.Gmet_0152"/>
<dbReference type="KEGG" id="gme:Gmet_0152"/>
<dbReference type="eggNOG" id="COG0838">
    <property type="taxonomic scope" value="Bacteria"/>
</dbReference>
<dbReference type="HOGENOM" id="CLU_119549_2_0_7"/>
<dbReference type="Proteomes" id="UP000007073">
    <property type="component" value="Chromosome"/>
</dbReference>
<dbReference type="GO" id="GO:0030964">
    <property type="term" value="C:NADH dehydrogenase complex"/>
    <property type="evidence" value="ECO:0007669"/>
    <property type="project" value="TreeGrafter"/>
</dbReference>
<dbReference type="GO" id="GO:0005886">
    <property type="term" value="C:plasma membrane"/>
    <property type="evidence" value="ECO:0007669"/>
    <property type="project" value="UniProtKB-SubCell"/>
</dbReference>
<dbReference type="GO" id="GO:0008137">
    <property type="term" value="F:NADH dehydrogenase (ubiquinone) activity"/>
    <property type="evidence" value="ECO:0007669"/>
    <property type="project" value="InterPro"/>
</dbReference>
<dbReference type="GO" id="GO:0050136">
    <property type="term" value="F:NADH:ubiquinone reductase (non-electrogenic) activity"/>
    <property type="evidence" value="ECO:0007669"/>
    <property type="project" value="UniProtKB-UniRule"/>
</dbReference>
<dbReference type="GO" id="GO:0048038">
    <property type="term" value="F:quinone binding"/>
    <property type="evidence" value="ECO:0007669"/>
    <property type="project" value="UniProtKB-KW"/>
</dbReference>
<dbReference type="FunFam" id="1.20.58.1610:FF:000013">
    <property type="entry name" value="NADH-quinone oxidoreductase subunit A 2"/>
    <property type="match status" value="1"/>
</dbReference>
<dbReference type="Gene3D" id="1.20.58.1610">
    <property type="entry name" value="NADH:ubiquinone/plastoquinone oxidoreductase, chain 3"/>
    <property type="match status" value="1"/>
</dbReference>
<dbReference type="HAMAP" id="MF_01394">
    <property type="entry name" value="NDH1_NuoA"/>
    <property type="match status" value="1"/>
</dbReference>
<dbReference type="InterPro" id="IPR023043">
    <property type="entry name" value="NAD(P)H_OxRDtase_bac/plastid"/>
</dbReference>
<dbReference type="InterPro" id="IPR000440">
    <property type="entry name" value="NADH_UbQ/plastoQ_OxRdtase_su3"/>
</dbReference>
<dbReference type="InterPro" id="IPR038430">
    <property type="entry name" value="NDAH_ubi_oxred_su3_sf"/>
</dbReference>
<dbReference type="PANTHER" id="PTHR11058:SF21">
    <property type="entry name" value="NADH-QUINONE OXIDOREDUCTASE SUBUNIT A"/>
    <property type="match status" value="1"/>
</dbReference>
<dbReference type="PANTHER" id="PTHR11058">
    <property type="entry name" value="NADH-UBIQUINONE OXIDOREDUCTASE CHAIN 3"/>
    <property type="match status" value="1"/>
</dbReference>
<dbReference type="Pfam" id="PF00507">
    <property type="entry name" value="Oxidored_q4"/>
    <property type="match status" value="1"/>
</dbReference>
<sequence length="138" mass="15461">MQQTTVANHSLFPTLPPEFLPLALYTVAATVLIGVLLLAAWWLGAKTTNRNKELPYESGVIPTGSARLAYPVPFYLIAIFFIVFDVEAAFIFAWATAWRELGLAGLIHITFFIVILLLGLVWLWMKGGLDWGPSRERR</sequence>
<feature type="chain" id="PRO_0000362691" description="NADH-quinone oxidoreductase subunit A 1">
    <location>
        <begin position="1"/>
        <end position="138"/>
    </location>
</feature>
<feature type="transmembrane region" description="Helical" evidence="1">
    <location>
        <begin position="19"/>
        <end position="39"/>
    </location>
</feature>
<feature type="transmembrane region" description="Helical" evidence="1">
    <location>
        <begin position="74"/>
        <end position="94"/>
    </location>
</feature>
<feature type="transmembrane region" description="Helical" evidence="1">
    <location>
        <begin position="103"/>
        <end position="123"/>
    </location>
</feature>
<comment type="function">
    <text evidence="1">NDH-1 shuttles electrons from NADH, via FMN and iron-sulfur (Fe-S) centers, to quinones in the respiratory chain. The immediate electron acceptor for the enzyme in this species is believed to be ubiquinone. Couples the redox reaction to proton translocation (for every two electrons transferred, four hydrogen ions are translocated across the cytoplasmic membrane), and thus conserves the redox energy in a proton gradient.</text>
</comment>
<comment type="catalytic activity">
    <reaction evidence="1">
        <text>a quinone + NADH + 5 H(+)(in) = a quinol + NAD(+) + 4 H(+)(out)</text>
        <dbReference type="Rhea" id="RHEA:57888"/>
        <dbReference type="ChEBI" id="CHEBI:15378"/>
        <dbReference type="ChEBI" id="CHEBI:24646"/>
        <dbReference type="ChEBI" id="CHEBI:57540"/>
        <dbReference type="ChEBI" id="CHEBI:57945"/>
        <dbReference type="ChEBI" id="CHEBI:132124"/>
    </reaction>
</comment>
<comment type="subunit">
    <text evidence="1">NDH-1 is composed of 14 different subunits. Subunits NuoA, H, J, K, L, M, N constitute the membrane sector of the complex.</text>
</comment>
<comment type="subcellular location">
    <subcellularLocation>
        <location evidence="1">Cell inner membrane</location>
        <topology evidence="1">Multi-pass membrane protein</topology>
    </subcellularLocation>
</comment>
<comment type="similarity">
    <text evidence="1">Belongs to the complex I subunit 3 family.</text>
</comment>
<accession>Q39ZC5</accession>
<keyword id="KW-0997">Cell inner membrane</keyword>
<keyword id="KW-1003">Cell membrane</keyword>
<keyword id="KW-0472">Membrane</keyword>
<keyword id="KW-0520">NAD</keyword>
<keyword id="KW-0874">Quinone</keyword>
<keyword id="KW-1185">Reference proteome</keyword>
<keyword id="KW-1278">Translocase</keyword>
<keyword id="KW-0812">Transmembrane</keyword>
<keyword id="KW-1133">Transmembrane helix</keyword>
<keyword id="KW-0813">Transport</keyword>
<keyword id="KW-0830">Ubiquinone</keyword>
<protein>
    <recommendedName>
        <fullName evidence="1">NADH-quinone oxidoreductase subunit A 1</fullName>
        <ecNumber evidence="1">7.1.1.-</ecNumber>
    </recommendedName>
    <alternativeName>
        <fullName evidence="1">NADH dehydrogenase I subunit A 1</fullName>
    </alternativeName>
    <alternativeName>
        <fullName evidence="1">NDH-1 subunit A 1</fullName>
    </alternativeName>
    <alternativeName>
        <fullName evidence="1">NUO1 1</fullName>
    </alternativeName>
</protein>
<proteinExistence type="inferred from homology"/>